<feature type="chain" id="PRO_0000191901" description="Transketolase">
    <location>
        <begin position="1"/>
        <end position="679"/>
    </location>
</feature>
<feature type="active site" description="Proton donor" evidence="1">
    <location>
        <position position="417"/>
    </location>
</feature>
<feature type="binding site" evidence="1">
    <location>
        <position position="30"/>
    </location>
    <ligand>
        <name>substrate</name>
    </ligand>
</feature>
<feature type="binding site" evidence="1">
    <location>
        <position position="69"/>
    </location>
    <ligand>
        <name>thiamine diphosphate</name>
        <dbReference type="ChEBI" id="CHEBI:58937"/>
    </ligand>
</feature>
<feature type="binding site" evidence="1">
    <location>
        <begin position="116"/>
        <end position="118"/>
    </location>
    <ligand>
        <name>thiamine diphosphate</name>
        <dbReference type="ChEBI" id="CHEBI:58937"/>
    </ligand>
</feature>
<feature type="binding site" evidence="1">
    <location>
        <position position="157"/>
    </location>
    <ligand>
        <name>Mg(2+)</name>
        <dbReference type="ChEBI" id="CHEBI:18420"/>
    </ligand>
</feature>
<feature type="binding site" evidence="1">
    <location>
        <position position="158"/>
    </location>
    <ligand>
        <name>thiamine diphosphate</name>
        <dbReference type="ChEBI" id="CHEBI:58937"/>
    </ligand>
</feature>
<feature type="binding site" evidence="1">
    <location>
        <position position="187"/>
    </location>
    <ligand>
        <name>Mg(2+)</name>
        <dbReference type="ChEBI" id="CHEBI:18420"/>
    </ligand>
</feature>
<feature type="binding site" evidence="1">
    <location>
        <position position="187"/>
    </location>
    <ligand>
        <name>thiamine diphosphate</name>
        <dbReference type="ChEBI" id="CHEBI:58937"/>
    </ligand>
</feature>
<feature type="binding site" evidence="1">
    <location>
        <position position="189"/>
    </location>
    <ligand>
        <name>Mg(2+)</name>
        <dbReference type="ChEBI" id="CHEBI:18420"/>
    </ligand>
</feature>
<feature type="binding site" evidence="1">
    <location>
        <position position="262"/>
    </location>
    <ligand>
        <name>substrate</name>
    </ligand>
</feature>
<feature type="binding site" evidence="1">
    <location>
        <position position="262"/>
    </location>
    <ligand>
        <name>thiamine diphosphate</name>
        <dbReference type="ChEBI" id="CHEBI:58937"/>
    </ligand>
</feature>
<feature type="binding site" evidence="1">
    <location>
        <position position="358"/>
    </location>
    <ligand>
        <name>substrate</name>
    </ligand>
</feature>
<feature type="binding site" evidence="1">
    <location>
        <position position="385"/>
    </location>
    <ligand>
        <name>substrate</name>
    </ligand>
</feature>
<feature type="binding site" evidence="1">
    <location>
        <position position="417"/>
    </location>
    <ligand>
        <name>thiamine diphosphate</name>
        <dbReference type="ChEBI" id="CHEBI:58937"/>
    </ligand>
</feature>
<feature type="binding site" evidence="1">
    <location>
        <position position="444"/>
    </location>
    <ligand>
        <name>thiamine diphosphate</name>
        <dbReference type="ChEBI" id="CHEBI:58937"/>
    </ligand>
</feature>
<feature type="binding site" evidence="1">
    <location>
        <position position="468"/>
    </location>
    <ligand>
        <name>substrate</name>
    </ligand>
</feature>
<feature type="binding site" evidence="1">
    <location>
        <position position="476"/>
    </location>
    <ligand>
        <name>substrate</name>
    </ligand>
</feature>
<feature type="binding site" evidence="1">
    <location>
        <position position="527"/>
    </location>
    <ligand>
        <name>substrate</name>
    </ligand>
</feature>
<feature type="site" description="Important for catalytic activity" evidence="1">
    <location>
        <position position="30"/>
    </location>
</feature>
<feature type="site" description="Important for catalytic activity" evidence="1">
    <location>
        <position position="262"/>
    </location>
</feature>
<reference key="1">
    <citation type="journal article" date="1997" name="Curr. Genet.">
        <title>Analysis of a transketolase gene from Kluyveromyces lactis reveals that the yeast enzymes are more related to transketolases of prokaryotic origins than to those of higher eukaryotes.</title>
        <authorList>
            <person name="Jacoby J.J."/>
            <person name="Heinisch J.J."/>
        </authorList>
    </citation>
    <scope>NUCLEOTIDE SEQUENCE [GENOMIC DNA]</scope>
    <source>
        <strain>ATCC 76492 / CBS 2359/152 / CLIB 210</strain>
    </source>
</reference>
<reference key="2">
    <citation type="journal article" date="2004" name="Nature">
        <title>Genome evolution in yeasts.</title>
        <authorList>
            <person name="Dujon B."/>
            <person name="Sherman D."/>
            <person name="Fischer G."/>
            <person name="Durrens P."/>
            <person name="Casaregola S."/>
            <person name="Lafontaine I."/>
            <person name="de Montigny J."/>
            <person name="Marck C."/>
            <person name="Neuveglise C."/>
            <person name="Talla E."/>
            <person name="Goffard N."/>
            <person name="Frangeul L."/>
            <person name="Aigle M."/>
            <person name="Anthouard V."/>
            <person name="Babour A."/>
            <person name="Barbe V."/>
            <person name="Barnay S."/>
            <person name="Blanchin S."/>
            <person name="Beckerich J.-M."/>
            <person name="Beyne E."/>
            <person name="Bleykasten C."/>
            <person name="Boisrame A."/>
            <person name="Boyer J."/>
            <person name="Cattolico L."/>
            <person name="Confanioleri F."/>
            <person name="de Daruvar A."/>
            <person name="Despons L."/>
            <person name="Fabre E."/>
            <person name="Fairhead C."/>
            <person name="Ferry-Dumazet H."/>
            <person name="Groppi A."/>
            <person name="Hantraye F."/>
            <person name="Hennequin C."/>
            <person name="Jauniaux N."/>
            <person name="Joyet P."/>
            <person name="Kachouri R."/>
            <person name="Kerrest A."/>
            <person name="Koszul R."/>
            <person name="Lemaire M."/>
            <person name="Lesur I."/>
            <person name="Ma L."/>
            <person name="Muller H."/>
            <person name="Nicaud J.-M."/>
            <person name="Nikolski M."/>
            <person name="Oztas S."/>
            <person name="Ozier-Kalogeropoulos O."/>
            <person name="Pellenz S."/>
            <person name="Potier S."/>
            <person name="Richard G.-F."/>
            <person name="Straub M.-L."/>
            <person name="Suleau A."/>
            <person name="Swennen D."/>
            <person name="Tekaia F."/>
            <person name="Wesolowski-Louvel M."/>
            <person name="Westhof E."/>
            <person name="Wirth B."/>
            <person name="Zeniou-Meyer M."/>
            <person name="Zivanovic Y."/>
            <person name="Bolotin-Fukuhara M."/>
            <person name="Thierry A."/>
            <person name="Bouchier C."/>
            <person name="Caudron B."/>
            <person name="Scarpelli C."/>
            <person name="Gaillardin C."/>
            <person name="Weissenbach J."/>
            <person name="Wincker P."/>
            <person name="Souciet J.-L."/>
        </authorList>
    </citation>
    <scope>NUCLEOTIDE SEQUENCE [LARGE SCALE GENOMIC DNA]</scope>
    <source>
        <strain>ATCC 8585 / CBS 2359 / DSM 70799 / NBRC 1267 / NRRL Y-1140 / WM37</strain>
    </source>
</reference>
<comment type="function">
    <text evidence="1">Catalyzes the transfer of a two-carbon ketol group from a ketose donor to an aldose acceptor, via a covalent intermediate with the cofactor thiamine pyrophosphate.</text>
</comment>
<comment type="catalytic activity">
    <reaction>
        <text>D-sedoheptulose 7-phosphate + D-glyceraldehyde 3-phosphate = aldehydo-D-ribose 5-phosphate + D-xylulose 5-phosphate</text>
        <dbReference type="Rhea" id="RHEA:10508"/>
        <dbReference type="ChEBI" id="CHEBI:57483"/>
        <dbReference type="ChEBI" id="CHEBI:57737"/>
        <dbReference type="ChEBI" id="CHEBI:58273"/>
        <dbReference type="ChEBI" id="CHEBI:59776"/>
        <dbReference type="EC" id="2.2.1.1"/>
    </reaction>
</comment>
<comment type="cofactor">
    <cofactor evidence="1">
        <name>Mg(2+)</name>
        <dbReference type="ChEBI" id="CHEBI:18420"/>
    </cofactor>
    <cofactor evidence="1">
        <name>Ca(2+)</name>
        <dbReference type="ChEBI" id="CHEBI:29108"/>
    </cofactor>
    <cofactor evidence="1">
        <name>Mn(2+)</name>
        <dbReference type="ChEBI" id="CHEBI:29035"/>
    </cofactor>
    <cofactor evidence="1">
        <name>Co(2+)</name>
        <dbReference type="ChEBI" id="CHEBI:48828"/>
    </cofactor>
    <text evidence="1">Binds 1 Mg(2+) ion per subunit. Can also utilize other divalent metal cations, such as Ca(2+), Mn(2+) and Co(2+).</text>
</comment>
<comment type="cofactor">
    <cofactor evidence="1">
        <name>thiamine diphosphate</name>
        <dbReference type="ChEBI" id="CHEBI:58937"/>
    </cofactor>
    <text evidence="1">Binds 1 thiamine pyrophosphate per subunit.</text>
</comment>
<comment type="subunit">
    <text evidence="1">Homodimer.</text>
</comment>
<comment type="similarity">
    <text evidence="2">Belongs to the transketolase family.</text>
</comment>
<accession>Q12630</accession>
<dbReference type="EC" id="2.2.1.1"/>
<dbReference type="EMBL" id="U65983">
    <property type="protein sequence ID" value="AAB05935.1"/>
    <property type="molecule type" value="Genomic_DNA"/>
</dbReference>
<dbReference type="EMBL" id="CR382122">
    <property type="protein sequence ID" value="CAH02329.1"/>
    <property type="molecule type" value="Genomic_DNA"/>
</dbReference>
<dbReference type="RefSeq" id="XP_451936.1">
    <property type="nucleotide sequence ID" value="XM_451936.1"/>
</dbReference>
<dbReference type="SMR" id="Q12630"/>
<dbReference type="FunCoup" id="Q12630">
    <property type="interactions" value="786"/>
</dbReference>
<dbReference type="STRING" id="284590.Q12630"/>
<dbReference type="PaxDb" id="284590-Q12630"/>
<dbReference type="KEGG" id="kla:KLLA0_B09152g"/>
<dbReference type="eggNOG" id="KOG0523">
    <property type="taxonomic scope" value="Eukaryota"/>
</dbReference>
<dbReference type="HOGENOM" id="CLU_009227_0_0_1"/>
<dbReference type="InParanoid" id="Q12630"/>
<dbReference type="OMA" id="ADYMRGS"/>
<dbReference type="Proteomes" id="UP000000598">
    <property type="component" value="Chromosome B"/>
</dbReference>
<dbReference type="GO" id="GO:0005829">
    <property type="term" value="C:cytosol"/>
    <property type="evidence" value="ECO:0007669"/>
    <property type="project" value="TreeGrafter"/>
</dbReference>
<dbReference type="GO" id="GO:0005634">
    <property type="term" value="C:nucleus"/>
    <property type="evidence" value="ECO:0007669"/>
    <property type="project" value="TreeGrafter"/>
</dbReference>
<dbReference type="GO" id="GO:0046872">
    <property type="term" value="F:metal ion binding"/>
    <property type="evidence" value="ECO:0007669"/>
    <property type="project" value="UniProtKB-KW"/>
</dbReference>
<dbReference type="GO" id="GO:0004802">
    <property type="term" value="F:transketolase activity"/>
    <property type="evidence" value="ECO:0007669"/>
    <property type="project" value="UniProtKB-EC"/>
</dbReference>
<dbReference type="GO" id="GO:0006098">
    <property type="term" value="P:pentose-phosphate shunt"/>
    <property type="evidence" value="ECO:0007669"/>
    <property type="project" value="TreeGrafter"/>
</dbReference>
<dbReference type="CDD" id="cd07033">
    <property type="entry name" value="TPP_PYR_DXS_TK_like"/>
    <property type="match status" value="1"/>
</dbReference>
<dbReference type="CDD" id="cd02012">
    <property type="entry name" value="TPP_TK"/>
    <property type="match status" value="1"/>
</dbReference>
<dbReference type="FunFam" id="3.40.50.920:FF:000003">
    <property type="entry name" value="Transketolase"/>
    <property type="match status" value="1"/>
</dbReference>
<dbReference type="FunFam" id="3.40.50.970:FF:000003">
    <property type="entry name" value="Transketolase"/>
    <property type="match status" value="1"/>
</dbReference>
<dbReference type="FunFam" id="3.40.50.970:FF:000004">
    <property type="entry name" value="Transketolase"/>
    <property type="match status" value="1"/>
</dbReference>
<dbReference type="Gene3D" id="3.40.50.920">
    <property type="match status" value="1"/>
</dbReference>
<dbReference type="Gene3D" id="3.40.50.970">
    <property type="match status" value="2"/>
</dbReference>
<dbReference type="InterPro" id="IPR029061">
    <property type="entry name" value="THDP-binding"/>
</dbReference>
<dbReference type="InterPro" id="IPR009014">
    <property type="entry name" value="Transketo_C/PFOR_II"/>
</dbReference>
<dbReference type="InterPro" id="IPR055152">
    <property type="entry name" value="Transketolase-like_C_2"/>
</dbReference>
<dbReference type="InterPro" id="IPR005475">
    <property type="entry name" value="Transketolase-like_Pyr-bd"/>
</dbReference>
<dbReference type="InterPro" id="IPR005478">
    <property type="entry name" value="Transketolase_bac-like"/>
</dbReference>
<dbReference type="InterPro" id="IPR020826">
    <property type="entry name" value="Transketolase_BS"/>
</dbReference>
<dbReference type="InterPro" id="IPR049557">
    <property type="entry name" value="Transketolase_CS"/>
</dbReference>
<dbReference type="InterPro" id="IPR033247">
    <property type="entry name" value="Transketolase_fam"/>
</dbReference>
<dbReference type="InterPro" id="IPR005474">
    <property type="entry name" value="Transketolase_N"/>
</dbReference>
<dbReference type="NCBIfam" id="TIGR00232">
    <property type="entry name" value="tktlase_bact"/>
    <property type="match status" value="1"/>
</dbReference>
<dbReference type="PANTHER" id="PTHR43522">
    <property type="entry name" value="TRANSKETOLASE"/>
    <property type="match status" value="1"/>
</dbReference>
<dbReference type="PANTHER" id="PTHR43522:SF2">
    <property type="entry name" value="TRANSKETOLASE 1-RELATED"/>
    <property type="match status" value="1"/>
</dbReference>
<dbReference type="Pfam" id="PF02779">
    <property type="entry name" value="Transket_pyr"/>
    <property type="match status" value="1"/>
</dbReference>
<dbReference type="Pfam" id="PF22613">
    <property type="entry name" value="Transketolase_C_1"/>
    <property type="match status" value="1"/>
</dbReference>
<dbReference type="Pfam" id="PF00456">
    <property type="entry name" value="Transketolase_N"/>
    <property type="match status" value="1"/>
</dbReference>
<dbReference type="SMART" id="SM00861">
    <property type="entry name" value="Transket_pyr"/>
    <property type="match status" value="1"/>
</dbReference>
<dbReference type="SUPFAM" id="SSF52518">
    <property type="entry name" value="Thiamin diphosphate-binding fold (THDP-binding)"/>
    <property type="match status" value="2"/>
</dbReference>
<dbReference type="SUPFAM" id="SSF52922">
    <property type="entry name" value="TK C-terminal domain-like"/>
    <property type="match status" value="1"/>
</dbReference>
<dbReference type="PROSITE" id="PS00801">
    <property type="entry name" value="TRANSKETOLASE_1"/>
    <property type="match status" value="1"/>
</dbReference>
<dbReference type="PROSITE" id="PS00802">
    <property type="entry name" value="TRANSKETOLASE_2"/>
    <property type="match status" value="1"/>
</dbReference>
<protein>
    <recommendedName>
        <fullName>Transketolase</fullName>
        <shortName>TK</shortName>
        <ecNumber>2.2.1.1</ecNumber>
    </recommendedName>
</protein>
<keyword id="KW-0106">Calcium</keyword>
<keyword id="KW-0460">Magnesium</keyword>
<keyword id="KW-0479">Metal-binding</keyword>
<keyword id="KW-1185">Reference proteome</keyword>
<keyword id="KW-0786">Thiamine pyrophosphate</keyword>
<keyword id="KW-0808">Transferase</keyword>
<evidence type="ECO:0000250" key="1"/>
<evidence type="ECO:0000305" key="2"/>
<organism>
    <name type="scientific">Kluyveromyces lactis (strain ATCC 8585 / CBS 2359 / DSM 70799 / NBRC 1267 / NRRL Y-1140 / WM37)</name>
    <name type="common">Yeast</name>
    <name type="synonym">Candida sphaerica</name>
    <dbReference type="NCBI Taxonomy" id="284590"/>
    <lineage>
        <taxon>Eukaryota</taxon>
        <taxon>Fungi</taxon>
        <taxon>Dikarya</taxon>
        <taxon>Ascomycota</taxon>
        <taxon>Saccharomycotina</taxon>
        <taxon>Saccharomycetes</taxon>
        <taxon>Saccharomycetales</taxon>
        <taxon>Saccharomycetaceae</taxon>
        <taxon>Kluyveromyces</taxon>
    </lineage>
</organism>
<gene>
    <name type="primary">TKL1</name>
    <name type="ordered locus">KLLA0B09152g</name>
</gene>
<proteinExistence type="inferred from homology"/>
<name>TKT1_KLULA</name>
<sequence length="679" mass="73703">MSQYTDIDRLAVSTIRLLAVDQVSAANSGHPGAPLGLAPAAHVIWKQMRLNPKNPEWINRDRFVLSNGHACALLYSLLHLFGYDMSIEDLKHFRHLGSKTPGHPEFELPGVEVTTGPLGQGISNAVGMAIAQANFAATYNKPDYELSDSYTYVFLGDGCLQEGVSSEASSLAGHLRLKNLIAFYDDNQITIDGNINVSFDEDVSKRYEAYGWEVLHVENGNDDLDAISKALEQAKLSDRPTLIKLTTTIGFGSLNAGSHSVHGAPLKADDVKQLKVKFGFNPEESFVVPQEVYDLYNKSTIEPGIEANKQWDALLDAYVGQFPELGAEVKRRLAGEFPEGWESKLPTYTPEDSAVASRKLSEIVLDNVFDTLPELLGGSADLTPSNLTRSKGAVDFQPPITGLGDYSGRYIRYGVREHGMGAIMNGISAFGANYRPYGGTFLNFVSYASGAVRLSALSGHPVIWVATHDSIGLGEDGPTHQPIETLAHFRAIPNLQVWRPADGNEVTAAYKVALTNKHTPAIIALSRQNLPQLQGSSVEKAVKGGYILQDVDQPDLAIVSTGSEVGIAVEAAKVLAEKNIKARIVSLPDFHSFGQQSKEYQLSVFPDGVPILSVEVLATSGWSKYAHQSFGLDRFGASGKGPAVYEKFEFTPQGIATRAEKTVEFYKGKQVISPLNTAF</sequence>